<dbReference type="EC" id="2.8.4.4" evidence="1"/>
<dbReference type="EMBL" id="CP000239">
    <property type="protein sequence ID" value="ABD00451.1"/>
    <property type="status" value="ALT_INIT"/>
    <property type="molecule type" value="Genomic_DNA"/>
</dbReference>
<dbReference type="RefSeq" id="WP_049749783.1">
    <property type="nucleotide sequence ID" value="NC_007775.1"/>
</dbReference>
<dbReference type="SMR" id="Q2JSD0"/>
<dbReference type="STRING" id="321327.CYA_2323"/>
<dbReference type="KEGG" id="cya:CYA_2323"/>
<dbReference type="eggNOG" id="COG0621">
    <property type="taxonomic scope" value="Bacteria"/>
</dbReference>
<dbReference type="HOGENOM" id="CLU_018697_0_1_3"/>
<dbReference type="OrthoDB" id="9805215at2"/>
<dbReference type="Proteomes" id="UP000008818">
    <property type="component" value="Chromosome"/>
</dbReference>
<dbReference type="GO" id="GO:0005829">
    <property type="term" value="C:cytosol"/>
    <property type="evidence" value="ECO:0007669"/>
    <property type="project" value="TreeGrafter"/>
</dbReference>
<dbReference type="GO" id="GO:0051539">
    <property type="term" value="F:4 iron, 4 sulfur cluster binding"/>
    <property type="evidence" value="ECO:0007669"/>
    <property type="project" value="UniProtKB-UniRule"/>
</dbReference>
<dbReference type="GO" id="GO:0035599">
    <property type="term" value="F:aspartic acid methylthiotransferase activity"/>
    <property type="evidence" value="ECO:0007669"/>
    <property type="project" value="TreeGrafter"/>
</dbReference>
<dbReference type="GO" id="GO:0046872">
    <property type="term" value="F:metal ion binding"/>
    <property type="evidence" value="ECO:0007669"/>
    <property type="project" value="UniProtKB-KW"/>
</dbReference>
<dbReference type="GO" id="GO:0103039">
    <property type="term" value="F:protein methylthiotransferase activity"/>
    <property type="evidence" value="ECO:0007669"/>
    <property type="project" value="UniProtKB-EC"/>
</dbReference>
<dbReference type="GO" id="GO:0006400">
    <property type="term" value="P:tRNA modification"/>
    <property type="evidence" value="ECO:0007669"/>
    <property type="project" value="InterPro"/>
</dbReference>
<dbReference type="CDD" id="cd01335">
    <property type="entry name" value="Radical_SAM"/>
    <property type="match status" value="1"/>
</dbReference>
<dbReference type="FunFam" id="3.80.30.20:FF:000001">
    <property type="entry name" value="tRNA-2-methylthio-N(6)-dimethylallyladenosine synthase 2"/>
    <property type="match status" value="1"/>
</dbReference>
<dbReference type="Gene3D" id="3.40.50.12160">
    <property type="entry name" value="Methylthiotransferase, N-terminal domain"/>
    <property type="match status" value="1"/>
</dbReference>
<dbReference type="Gene3D" id="2.40.50.140">
    <property type="entry name" value="Nucleic acid-binding proteins"/>
    <property type="match status" value="1"/>
</dbReference>
<dbReference type="Gene3D" id="3.80.30.20">
    <property type="entry name" value="tm_1862 like domain"/>
    <property type="match status" value="1"/>
</dbReference>
<dbReference type="HAMAP" id="MF_01865">
    <property type="entry name" value="MTTase_RimO"/>
    <property type="match status" value="1"/>
</dbReference>
<dbReference type="InterPro" id="IPR006638">
    <property type="entry name" value="Elp3/MiaA/NifB-like_rSAM"/>
</dbReference>
<dbReference type="InterPro" id="IPR005839">
    <property type="entry name" value="Methylthiotransferase"/>
</dbReference>
<dbReference type="InterPro" id="IPR020612">
    <property type="entry name" value="Methylthiotransferase_CS"/>
</dbReference>
<dbReference type="InterPro" id="IPR013848">
    <property type="entry name" value="Methylthiotransferase_N"/>
</dbReference>
<dbReference type="InterPro" id="IPR038135">
    <property type="entry name" value="Methylthiotransferase_N_sf"/>
</dbReference>
<dbReference type="InterPro" id="IPR012340">
    <property type="entry name" value="NA-bd_OB-fold"/>
</dbReference>
<dbReference type="InterPro" id="IPR005840">
    <property type="entry name" value="Ribosomal_uS12_MeSTrfase_RimO"/>
</dbReference>
<dbReference type="InterPro" id="IPR007197">
    <property type="entry name" value="rSAM"/>
</dbReference>
<dbReference type="InterPro" id="IPR023404">
    <property type="entry name" value="rSAM_horseshoe"/>
</dbReference>
<dbReference type="InterPro" id="IPR002792">
    <property type="entry name" value="TRAM_dom"/>
</dbReference>
<dbReference type="NCBIfam" id="TIGR01125">
    <property type="entry name" value="30S ribosomal protein S12 methylthiotransferase RimO"/>
    <property type="match status" value="1"/>
</dbReference>
<dbReference type="NCBIfam" id="TIGR00089">
    <property type="entry name" value="MiaB/RimO family radical SAM methylthiotransferase"/>
    <property type="match status" value="1"/>
</dbReference>
<dbReference type="PANTHER" id="PTHR43837">
    <property type="entry name" value="RIBOSOMAL PROTEIN S12 METHYLTHIOTRANSFERASE RIMO"/>
    <property type="match status" value="1"/>
</dbReference>
<dbReference type="PANTHER" id="PTHR43837:SF1">
    <property type="entry name" value="RIBOSOMAL PROTEIN US12 METHYLTHIOTRANSFERASE RIMO"/>
    <property type="match status" value="1"/>
</dbReference>
<dbReference type="Pfam" id="PF04055">
    <property type="entry name" value="Radical_SAM"/>
    <property type="match status" value="1"/>
</dbReference>
<dbReference type="Pfam" id="PF18693">
    <property type="entry name" value="TRAM_2"/>
    <property type="match status" value="1"/>
</dbReference>
<dbReference type="Pfam" id="PF00919">
    <property type="entry name" value="UPF0004"/>
    <property type="match status" value="1"/>
</dbReference>
<dbReference type="SFLD" id="SFLDG01082">
    <property type="entry name" value="B12-binding_domain_containing"/>
    <property type="match status" value="1"/>
</dbReference>
<dbReference type="SFLD" id="SFLDS00029">
    <property type="entry name" value="Radical_SAM"/>
    <property type="match status" value="1"/>
</dbReference>
<dbReference type="SFLD" id="SFLDF00274">
    <property type="entry name" value="ribosomal_protein_S12_methylth"/>
    <property type="match status" value="1"/>
</dbReference>
<dbReference type="SMART" id="SM00729">
    <property type="entry name" value="Elp3"/>
    <property type="match status" value="1"/>
</dbReference>
<dbReference type="SUPFAM" id="SSF102114">
    <property type="entry name" value="Radical SAM enzymes"/>
    <property type="match status" value="1"/>
</dbReference>
<dbReference type="PROSITE" id="PS51449">
    <property type="entry name" value="MTTASE_N"/>
    <property type="match status" value="1"/>
</dbReference>
<dbReference type="PROSITE" id="PS01278">
    <property type="entry name" value="MTTASE_RADICAL"/>
    <property type="match status" value="1"/>
</dbReference>
<dbReference type="PROSITE" id="PS51918">
    <property type="entry name" value="RADICAL_SAM"/>
    <property type="match status" value="1"/>
</dbReference>
<dbReference type="PROSITE" id="PS50926">
    <property type="entry name" value="TRAM"/>
    <property type="match status" value="1"/>
</dbReference>
<name>RIMO_SYNJA</name>
<sequence>MNWLETALSTSSLKEAPAVAVLHLGCEKNRVDTEHMLGLLAQAGYRVEGDEDSADYVIVNTCSFIEAARRESVSTLMELAVQGKKIIIAGCLAQHFQEELLREIPEAVAIVGTGDYHQIVQVIQRAERGERVNAVTSSLDYIADETVPRYRTTHAPVAYLRVAEGCDYRCSFCIIPHLRGKQRSRPIESILREAEQLAAEGVQELILISQITTNYGLDLYGEPRLAELIRALGQIPIPWIRMLYAYPTGITPAVVEAIQETPNFLLYLDLPLQHSHPAILKAMNRPWQGQVNDRLIERLRQALPKAVLRTSFIVGFPGETEEHFQHLLEFVQRHQFDHVGVFTFSPEEGTPAYHLPQQVPEPLKEERRARLMQLQQGIAFRRNREQVGQVVPVLLEQENPRTGEWIGRSPRFAPEVDGVVYVRGPGSLGSLVPVQITRAEPYDLFGQVVEAPAGFSWSGR</sequence>
<protein>
    <recommendedName>
        <fullName evidence="1">Ribosomal protein uS12 methylthiotransferase RimO</fullName>
        <shortName evidence="1">uS12 MTTase</shortName>
        <shortName evidence="1">uS12 methylthiotransferase</shortName>
        <ecNumber evidence="1">2.8.4.4</ecNumber>
    </recommendedName>
    <alternativeName>
        <fullName evidence="1">Ribosomal protein uS12 (aspartate-C(3))-methylthiotransferase</fullName>
    </alternativeName>
    <alternativeName>
        <fullName evidence="1">Ribosome maturation factor RimO</fullName>
    </alternativeName>
</protein>
<keyword id="KW-0004">4Fe-4S</keyword>
<keyword id="KW-0963">Cytoplasm</keyword>
<keyword id="KW-0408">Iron</keyword>
<keyword id="KW-0411">Iron-sulfur</keyword>
<keyword id="KW-0479">Metal-binding</keyword>
<keyword id="KW-0949">S-adenosyl-L-methionine</keyword>
<keyword id="KW-0808">Transferase</keyword>
<reference key="1">
    <citation type="journal article" date="2007" name="ISME J.">
        <title>Population level functional diversity in a microbial community revealed by comparative genomic and metagenomic analyses.</title>
        <authorList>
            <person name="Bhaya D."/>
            <person name="Grossman A.R."/>
            <person name="Steunou A.-S."/>
            <person name="Khuri N."/>
            <person name="Cohan F.M."/>
            <person name="Hamamura N."/>
            <person name="Melendrez M.C."/>
            <person name="Bateson M.M."/>
            <person name="Ward D.M."/>
            <person name="Heidelberg J.F."/>
        </authorList>
    </citation>
    <scope>NUCLEOTIDE SEQUENCE [LARGE SCALE GENOMIC DNA]</scope>
    <source>
        <strain>JA-3-3Ab</strain>
    </source>
</reference>
<comment type="function">
    <text evidence="1">Catalyzes the methylthiolation of an aspartic acid residue of ribosomal protein uS12.</text>
</comment>
<comment type="catalytic activity">
    <reaction evidence="1">
        <text>L-aspartate(89)-[ribosomal protein uS12]-hydrogen + (sulfur carrier)-SH + AH2 + 2 S-adenosyl-L-methionine = 3-methylsulfanyl-L-aspartate(89)-[ribosomal protein uS12]-hydrogen + (sulfur carrier)-H + 5'-deoxyadenosine + L-methionine + A + S-adenosyl-L-homocysteine + 2 H(+)</text>
        <dbReference type="Rhea" id="RHEA:37087"/>
        <dbReference type="Rhea" id="RHEA-COMP:10460"/>
        <dbReference type="Rhea" id="RHEA-COMP:10461"/>
        <dbReference type="Rhea" id="RHEA-COMP:14737"/>
        <dbReference type="Rhea" id="RHEA-COMP:14739"/>
        <dbReference type="ChEBI" id="CHEBI:13193"/>
        <dbReference type="ChEBI" id="CHEBI:15378"/>
        <dbReference type="ChEBI" id="CHEBI:17319"/>
        <dbReference type="ChEBI" id="CHEBI:17499"/>
        <dbReference type="ChEBI" id="CHEBI:29917"/>
        <dbReference type="ChEBI" id="CHEBI:29961"/>
        <dbReference type="ChEBI" id="CHEBI:57844"/>
        <dbReference type="ChEBI" id="CHEBI:57856"/>
        <dbReference type="ChEBI" id="CHEBI:59789"/>
        <dbReference type="ChEBI" id="CHEBI:64428"/>
        <dbReference type="ChEBI" id="CHEBI:73599"/>
        <dbReference type="EC" id="2.8.4.4"/>
    </reaction>
</comment>
<comment type="cofactor">
    <cofactor evidence="1">
        <name>[4Fe-4S] cluster</name>
        <dbReference type="ChEBI" id="CHEBI:49883"/>
    </cofactor>
    <text evidence="1">Binds 2 [4Fe-4S] clusters. One cluster is coordinated with 3 cysteines and an exchangeable S-adenosyl-L-methionine.</text>
</comment>
<comment type="subcellular location">
    <subcellularLocation>
        <location evidence="1">Cytoplasm</location>
    </subcellularLocation>
</comment>
<comment type="similarity">
    <text evidence="1">Belongs to the methylthiotransferase family. RimO subfamily.</text>
</comment>
<comment type="sequence caution" evidence="3">
    <conflict type="erroneous initiation">
        <sequence resource="EMBL-CDS" id="ABD00451"/>
    </conflict>
</comment>
<gene>
    <name evidence="1" type="primary">rimO</name>
    <name type="ordered locus">CYA_2323</name>
</gene>
<accession>Q2JSD0</accession>
<organism>
    <name type="scientific">Synechococcus sp. (strain JA-3-3Ab)</name>
    <name type="common">Cyanobacteria bacterium Yellowstone A-Prime</name>
    <dbReference type="NCBI Taxonomy" id="321327"/>
    <lineage>
        <taxon>Bacteria</taxon>
        <taxon>Bacillati</taxon>
        <taxon>Cyanobacteriota</taxon>
        <taxon>Cyanophyceae</taxon>
        <taxon>Synechococcales</taxon>
        <taxon>Synechococcaceae</taxon>
        <taxon>Synechococcus</taxon>
    </lineage>
</organism>
<proteinExistence type="inferred from homology"/>
<feature type="chain" id="PRO_0000375036" description="Ribosomal protein uS12 methylthiotransferase RimO">
    <location>
        <begin position="1"/>
        <end position="460"/>
    </location>
</feature>
<feature type="domain" description="MTTase N-terminal" evidence="1">
    <location>
        <begin position="17"/>
        <end position="128"/>
    </location>
</feature>
<feature type="domain" description="Radical SAM core" evidence="2">
    <location>
        <begin position="152"/>
        <end position="381"/>
    </location>
</feature>
<feature type="domain" description="TRAM" evidence="1">
    <location>
        <begin position="384"/>
        <end position="450"/>
    </location>
</feature>
<feature type="binding site" evidence="1">
    <location>
        <position position="26"/>
    </location>
    <ligand>
        <name>[4Fe-4S] cluster</name>
        <dbReference type="ChEBI" id="CHEBI:49883"/>
        <label>1</label>
    </ligand>
</feature>
<feature type="binding site" evidence="1">
    <location>
        <position position="62"/>
    </location>
    <ligand>
        <name>[4Fe-4S] cluster</name>
        <dbReference type="ChEBI" id="CHEBI:49883"/>
        <label>1</label>
    </ligand>
</feature>
<feature type="binding site" evidence="1">
    <location>
        <position position="91"/>
    </location>
    <ligand>
        <name>[4Fe-4S] cluster</name>
        <dbReference type="ChEBI" id="CHEBI:49883"/>
        <label>1</label>
    </ligand>
</feature>
<feature type="binding site" evidence="1">
    <location>
        <position position="166"/>
    </location>
    <ligand>
        <name>[4Fe-4S] cluster</name>
        <dbReference type="ChEBI" id="CHEBI:49883"/>
        <label>2</label>
        <note>4Fe-4S-S-AdoMet</note>
    </ligand>
</feature>
<feature type="binding site" evidence="1">
    <location>
        <position position="170"/>
    </location>
    <ligand>
        <name>[4Fe-4S] cluster</name>
        <dbReference type="ChEBI" id="CHEBI:49883"/>
        <label>2</label>
        <note>4Fe-4S-S-AdoMet</note>
    </ligand>
</feature>
<feature type="binding site" evidence="1">
    <location>
        <position position="173"/>
    </location>
    <ligand>
        <name>[4Fe-4S] cluster</name>
        <dbReference type="ChEBI" id="CHEBI:49883"/>
        <label>2</label>
        <note>4Fe-4S-S-AdoMet</note>
    </ligand>
</feature>
<evidence type="ECO:0000255" key="1">
    <source>
        <dbReference type="HAMAP-Rule" id="MF_01865"/>
    </source>
</evidence>
<evidence type="ECO:0000255" key="2">
    <source>
        <dbReference type="PROSITE-ProRule" id="PRU01266"/>
    </source>
</evidence>
<evidence type="ECO:0000305" key="3"/>